<reference key="1">
    <citation type="journal article" date="2012" name="Proc. Natl. Acad. Sci. U.S.A.">
        <title>Plant tropane alkaloid biosynthesis evolved independently in the Solanaceae and Erythroxylaceae.</title>
        <authorList>
            <person name="Jirschitzka J."/>
            <person name="Schmidt G.W."/>
            <person name="Reichelt M."/>
            <person name="Schneider B."/>
            <person name="Gershenzon J."/>
            <person name="D'Auria J.C."/>
        </authorList>
    </citation>
    <scope>NUCLEOTIDE SEQUENCE [MRNA]</scope>
    <scope>FUNCTION</scope>
</reference>
<evidence type="ECO:0000250" key="1"/>
<evidence type="ECO:0000269" key="2">
    <source>
    </source>
</evidence>
<evidence type="ECO:0000305" key="3"/>
<keyword id="KW-0560">Oxidoreductase</keyword>
<accession>H9BFQ0</accession>
<comment type="function">
    <text evidence="2">Has no tropinone reductase activity.</text>
</comment>
<comment type="similarity">
    <text evidence="3">Belongs to the short-chain dehydrogenases/reductases (SDR) family.</text>
</comment>
<sequence>MTSIAGPHKRLEGKVAIITGGASGIGACTAELFHENGAKVVIADIQDDLGQALATKLGGKACYIHCDVSKEDDVINLVDTTVAKYGRLDIMFNNAGIIEGQGLPVSVVESEKSDLDRLLSVNLGGAFLGAKHATRVMVQQRKGCILFTSSLCTSIAGLSGHAYAASKSGVCGLAKNLTPELGKYGIRVNCISPYGLVTGISNISEANRELVEAMLSELGTLSGQTLRADGIAKAALFLASDEAYYVSGINMVVDGGYSVVNPRLADAIYSKL</sequence>
<name>TPRL1_ERYCB</name>
<organism>
    <name type="scientific">Erythroxylum coca</name>
    <name type="common">Coca plant</name>
    <dbReference type="NCBI Taxonomy" id="289672"/>
    <lineage>
        <taxon>Eukaryota</taxon>
        <taxon>Viridiplantae</taxon>
        <taxon>Streptophyta</taxon>
        <taxon>Embryophyta</taxon>
        <taxon>Tracheophyta</taxon>
        <taxon>Spermatophyta</taxon>
        <taxon>Magnoliopsida</taxon>
        <taxon>eudicotyledons</taxon>
        <taxon>Gunneridae</taxon>
        <taxon>Pentapetalae</taxon>
        <taxon>rosids</taxon>
        <taxon>fabids</taxon>
        <taxon>Malpighiales</taxon>
        <taxon>Erythroxylaceae</taxon>
        <taxon>Erythroxylum</taxon>
    </lineage>
</organism>
<proteinExistence type="evidence at transcript level"/>
<dbReference type="EC" id="1.1.1.-"/>
<dbReference type="EMBL" id="JQ015102">
    <property type="protein sequence ID" value="AFD32319.1"/>
    <property type="molecule type" value="mRNA"/>
</dbReference>
<dbReference type="SMR" id="H9BFQ0"/>
<dbReference type="GO" id="GO:0016491">
    <property type="term" value="F:oxidoreductase activity"/>
    <property type="evidence" value="ECO:0007669"/>
    <property type="project" value="UniProtKB-KW"/>
</dbReference>
<dbReference type="FunFam" id="3.40.50.720:FF:000084">
    <property type="entry name" value="Short-chain dehydrogenase reductase"/>
    <property type="match status" value="1"/>
</dbReference>
<dbReference type="Gene3D" id="3.40.50.720">
    <property type="entry name" value="NAD(P)-binding Rossmann-like Domain"/>
    <property type="match status" value="1"/>
</dbReference>
<dbReference type="InterPro" id="IPR036291">
    <property type="entry name" value="NAD(P)-bd_dom_sf"/>
</dbReference>
<dbReference type="InterPro" id="IPR002347">
    <property type="entry name" value="SDR_fam"/>
</dbReference>
<dbReference type="PANTHER" id="PTHR43180">
    <property type="entry name" value="3-OXOACYL-(ACYL-CARRIER-PROTEIN) REDUCTASE (AFU_ORTHOLOGUE AFUA_6G11210)"/>
    <property type="match status" value="1"/>
</dbReference>
<dbReference type="PANTHER" id="PTHR43180:SF91">
    <property type="entry name" value="ALCOHOL DEHYDROGENASE"/>
    <property type="match status" value="1"/>
</dbReference>
<dbReference type="Pfam" id="PF13561">
    <property type="entry name" value="adh_short_C2"/>
    <property type="match status" value="1"/>
</dbReference>
<dbReference type="PRINTS" id="PR00081">
    <property type="entry name" value="GDHRDH"/>
</dbReference>
<dbReference type="PRINTS" id="PR00080">
    <property type="entry name" value="SDRFAMILY"/>
</dbReference>
<dbReference type="SUPFAM" id="SSF51735">
    <property type="entry name" value="NAD(P)-binding Rossmann-fold domains"/>
    <property type="match status" value="1"/>
</dbReference>
<feature type="chain" id="PRO_0000421861" description="Tropinone reductase-like 1">
    <location>
        <begin position="1"/>
        <end position="272"/>
    </location>
</feature>
<feature type="active site" description="Proton acceptor" evidence="1">
    <location>
        <position position="163"/>
    </location>
</feature>
<feature type="binding site" evidence="1">
    <location>
        <begin position="17"/>
        <end position="41"/>
    </location>
    <ligand>
        <name>NAD(+)</name>
        <dbReference type="ChEBI" id="CHEBI:57540"/>
    </ligand>
</feature>
<feature type="binding site" evidence="1">
    <location>
        <position position="150"/>
    </location>
    <ligand>
        <name>substrate</name>
    </ligand>
</feature>
<protein>
    <recommendedName>
        <fullName>Tropinone reductase-like 1</fullName>
        <ecNumber>1.1.1.-</ecNumber>
    </recommendedName>
</protein>